<name>Y1421_ARATH</name>
<organism>
    <name type="scientific">Arabidopsis thaliana</name>
    <name type="common">Mouse-ear cress</name>
    <dbReference type="NCBI Taxonomy" id="3702"/>
    <lineage>
        <taxon>Eukaryota</taxon>
        <taxon>Viridiplantae</taxon>
        <taxon>Streptophyta</taxon>
        <taxon>Embryophyta</taxon>
        <taxon>Tracheophyta</taxon>
        <taxon>Spermatophyta</taxon>
        <taxon>Magnoliopsida</taxon>
        <taxon>eudicotyledons</taxon>
        <taxon>Gunneridae</taxon>
        <taxon>Pentapetalae</taxon>
        <taxon>rosids</taxon>
        <taxon>malvids</taxon>
        <taxon>Brassicales</taxon>
        <taxon>Brassicaceae</taxon>
        <taxon>Camelineae</taxon>
        <taxon>Arabidopsis</taxon>
    </lineage>
</organism>
<sequence>MQIFLFFFSLILCFVLISSQTLEDDKKALLHFLSSFNSSRLHWNQSSDVCHSWTGVTCNENGDRIVSVRLPAVGFNGLIPPFTISRLSSLKFLSLRKNHFTGDFPSDFTNLKSLTHLYLQHNHLSGPLLAIFSELKNLKVLDLSNNGFNGSIPTSLSGLTSLQVLNLANNSFSGEIPNLHLPKLSQINLSNNKLIGTIPKSLQRFQSSAFSGNNLTERKKQRKTPFGLSQLAFLLILSAACVLCVSGLSFIMITCFGKTRISGKLRKRDSSSPPGNWTSRDDNTEEGGKIIFFGGRNHLFDLDDLLSSSAEVLGKGAFGTTYKVTMEDMSTVVVKRLKEVVVGRREFEQQMEIIGMIRHENVAELKAYYYSKDDKLAVYSYYNHGSLFEILHGNRGRYHRVPLDWDARLRIATGAARGLAKIHEGKFIHGNIKSSNIFLDSQCYGCIGDVGLTTIMRSLPQTTCLTSGYHAPEITDTRRSTQFSDVYSFGVVLLELLTGKSPVSQAELVPTGGENMDLASWIRSVVAKEWTGEVFDMEILSQSGGFEEEMVEMLQIGLACVALKQQERPHIAQVLKLIEDIRSVDAE</sequence>
<accession>Q9SH71</accession>
<evidence type="ECO:0000250" key="1"/>
<evidence type="ECO:0000250" key="2">
    <source>
        <dbReference type="UniProtKB" id="Q94AG2"/>
    </source>
</evidence>
<evidence type="ECO:0000250" key="3">
    <source>
        <dbReference type="UniProtKB" id="Q94F62"/>
    </source>
</evidence>
<evidence type="ECO:0000255" key="4"/>
<evidence type="ECO:0000255" key="5">
    <source>
        <dbReference type="PROSITE-ProRule" id="PRU00159"/>
    </source>
</evidence>
<comment type="interaction">
    <interactant intactId="EBI-20651385">
        <id>Q9SH71</id>
    </interactant>
    <interactant intactId="EBI-16954682">
        <id>Q9M9S4</id>
        <label>At1g14390</label>
    </interactant>
    <organismsDiffer>false</organismsDiffer>
    <experiments>2</experiments>
</comment>
<comment type="interaction">
    <interactant intactId="EBI-20651385">
        <id>Q9SH71</id>
    </interactant>
    <interactant intactId="EBI-20651385">
        <id>Q9SH71</id>
        <label>At1g64210</label>
    </interactant>
    <organismsDiffer>false</organismsDiffer>
    <experiments>2</experiments>
</comment>
<comment type="interaction">
    <interactant intactId="EBI-20651385">
        <id>Q9SH71</id>
    </interactant>
    <interactant intactId="EBI-20651541">
        <id>C0LGJ9</id>
        <label>At2g02780</label>
    </interactant>
    <organismsDiffer>false</organismsDiffer>
    <experiments>2</experiments>
</comment>
<comment type="interaction">
    <interactant intactId="EBI-20651385">
        <id>Q9SH71</id>
    </interactant>
    <interactant intactId="EBI-16965118">
        <id>C0LGK9</id>
        <label>At2g24230</label>
    </interactant>
    <organismsDiffer>false</organismsDiffer>
    <experiments>2</experiments>
</comment>
<comment type="interaction">
    <interactant intactId="EBI-20651385">
        <id>Q9SH71</id>
    </interactant>
    <interactant intactId="EBI-20654480">
        <id>C0LGR6</id>
        <label>At4g29180</label>
    </interactant>
    <organismsDiffer>false</organismsDiffer>
    <experiments>2</experiments>
</comment>
<comment type="interaction">
    <interactant intactId="EBI-20651385">
        <id>Q9SH71</id>
    </interactant>
    <interactant intactId="EBI-16954266">
        <id>C0LGT1</id>
        <label>At5g10290</label>
    </interactant>
    <organismsDiffer>false</organismsDiffer>
    <experiments>2</experiments>
</comment>
<comment type="interaction">
    <interactant intactId="EBI-20651385">
        <id>Q9SH71</id>
    </interactant>
    <interactant intactId="EBI-17123993">
        <id>Q9LT96</id>
        <label>At5g49770</label>
    </interactant>
    <organismsDiffer>false</organismsDiffer>
    <experiments>2</experiments>
</comment>
<comment type="interaction">
    <interactant intactId="EBI-20651385">
        <id>Q9SH71</id>
    </interactant>
    <interactant intactId="EBI-1646111">
        <id>Q9SYQ8</id>
        <label>CLV1</label>
    </interactant>
    <organismsDiffer>false</organismsDiffer>
    <experiments>2</experiments>
</comment>
<comment type="interaction">
    <interactant intactId="EBI-20651385">
        <id>Q9SH71</id>
    </interactant>
    <interactant intactId="EBI-1640748">
        <id>Q9LYN8</id>
        <label>EMS1</label>
    </interactant>
    <organismsDiffer>false</organismsDiffer>
    <experiments>2</experiments>
</comment>
<comment type="interaction">
    <interactant intactId="EBI-20651385">
        <id>Q9SH71</id>
    </interactant>
    <interactant intactId="EBI-20655031">
        <id>Q9SN97</id>
        <label>F18L15.140</label>
    </interactant>
    <organismsDiffer>false</organismsDiffer>
    <experiments>2</experiments>
</comment>
<comment type="interaction">
    <interactant intactId="EBI-20651385">
        <id>Q9SH71</id>
    </interactant>
    <interactant intactId="EBI-16955231">
        <id>Q9M0D8</id>
        <label>LRR-RLK</label>
    </interactant>
    <organismsDiffer>false</organismsDiffer>
    <experiments>2</experiments>
</comment>
<comment type="interaction">
    <interactant intactId="EBI-20651385">
        <id>Q9SH71</id>
    </interactant>
    <interactant intactId="EBI-16955556">
        <id>Q8GX94</id>
        <label>MQB2.1</label>
    </interactant>
    <organismsDiffer>false</organismsDiffer>
    <experiments>2</experiments>
</comment>
<comment type="interaction">
    <interactant intactId="EBI-20651385">
        <id>Q9SH71</id>
    </interactant>
    <interactant intactId="EBI-17121474">
        <id>Q93ZS4</id>
        <label>NIK3</label>
    </interactant>
    <organismsDiffer>false</organismsDiffer>
    <experiments>2</experiments>
</comment>
<comment type="interaction">
    <interactant intactId="EBI-20651385">
        <id>Q9SH71</id>
    </interactant>
    <interactant intactId="EBI-16172949">
        <id>Q9ZVR7</id>
        <label>PSKR1</label>
    </interactant>
    <organismsDiffer>false</organismsDiffer>
    <experiments>2</experiments>
</comment>
<comment type="interaction">
    <interactant intactId="EBI-20651385">
        <id>Q9SH71</id>
    </interactant>
    <interactant intactId="EBI-16902047">
        <id>Q9FN37</id>
        <label>PSKR2</label>
    </interactant>
    <organismsDiffer>false</organismsDiffer>
    <experiments>2</experiments>
</comment>
<comment type="interaction">
    <interactant intactId="EBI-20651385">
        <id>Q9SH71</id>
    </interactant>
    <interactant intactId="EBI-16946268">
        <id>Q9FRS6</id>
        <label>PXL1</label>
    </interactant>
    <organismsDiffer>false</organismsDiffer>
    <experiments>2</experiments>
</comment>
<comment type="interaction">
    <interactant intactId="EBI-20651385">
        <id>Q9SH71</id>
    </interactant>
    <interactant intactId="EBI-16905883">
        <id>Q9SKB2</id>
        <label>SOBIR1</label>
    </interactant>
    <organismsDiffer>false</organismsDiffer>
    <experiments>2</experiments>
</comment>
<comment type="interaction">
    <interactant intactId="EBI-20651385">
        <id>Q9SH71</id>
    </interactant>
    <interactant intactId="EBI-16896864">
        <id>Q9SIT1</id>
        <label>TMK3</label>
    </interactant>
    <organismsDiffer>false</organismsDiffer>
    <experiments>2</experiments>
</comment>
<comment type="interaction">
    <interactant intactId="EBI-20651385">
        <id>Q9SH71</id>
    </interactant>
    <interactant intactId="EBI-20658163">
        <id>Q8GY50</id>
        <label>VRLK1</label>
    </interactant>
    <organismsDiffer>false</organismsDiffer>
    <experiments>2</experiments>
</comment>
<comment type="subcellular location">
    <subcellularLocation>
        <location evidence="1">Cell membrane</location>
        <topology evidence="1">Single-pass type I membrane protein</topology>
    </subcellularLocation>
</comment>
<comment type="domain">
    <text>The protein kinase domain is predicted to be catalytically inactive.</text>
</comment>
<feature type="signal peptide" evidence="4">
    <location>
        <begin position="1"/>
        <end position="19"/>
    </location>
</feature>
<feature type="chain" id="PRO_0000401351" description="Putative inactive receptor-like protein kinase At1g64210">
    <location>
        <begin position="20"/>
        <end position="587"/>
    </location>
</feature>
<feature type="topological domain" description="Extracellular" evidence="4">
    <location>
        <begin position="20"/>
        <end position="232"/>
    </location>
</feature>
<feature type="transmembrane region" description="Helical" evidence="4">
    <location>
        <begin position="233"/>
        <end position="253"/>
    </location>
</feature>
<feature type="topological domain" description="Cytoplasmic" evidence="4">
    <location>
        <begin position="254"/>
        <end position="587"/>
    </location>
</feature>
<feature type="repeat" description="LRR 1">
    <location>
        <begin position="89"/>
        <end position="112"/>
    </location>
</feature>
<feature type="repeat" description="LRR 2">
    <location>
        <begin position="113"/>
        <end position="136"/>
    </location>
</feature>
<feature type="repeat" description="LRR 3">
    <location>
        <begin position="137"/>
        <end position="160"/>
    </location>
</feature>
<feature type="repeat" description="LRR 4">
    <location>
        <begin position="161"/>
        <end position="183"/>
    </location>
</feature>
<feature type="repeat" description="LRR 5">
    <location>
        <begin position="184"/>
        <end position="205"/>
    </location>
</feature>
<feature type="domain" description="Protein kinase" evidence="5">
    <location>
        <begin position="307"/>
        <end position="581"/>
    </location>
</feature>
<feature type="binding site" evidence="5">
    <location>
        <begin position="313"/>
        <end position="321"/>
    </location>
    <ligand>
        <name>ATP</name>
        <dbReference type="ChEBI" id="CHEBI:30616"/>
    </ligand>
</feature>
<feature type="binding site" evidence="5">
    <location>
        <position position="335"/>
    </location>
    <ligand>
        <name>ATP</name>
        <dbReference type="ChEBI" id="CHEBI:30616"/>
    </ligand>
</feature>
<feature type="modified residue" description="Phosphoserine" evidence="3">
    <location>
        <position position="309"/>
    </location>
</feature>
<feature type="modified residue" description="Phosphoserine" evidence="2">
    <location>
        <position position="386"/>
    </location>
</feature>
<feature type="modified residue" description="Phosphothreonine" evidence="3">
    <location>
        <position position="462"/>
    </location>
</feature>
<feature type="modified residue" description="Phosphothreonine" evidence="3">
    <location>
        <position position="463"/>
    </location>
</feature>
<feature type="modified residue" description="Phosphothreonine" evidence="3">
    <location>
        <position position="466"/>
    </location>
</feature>
<feature type="modified residue" description="Phosphothreonine" evidence="2">
    <location>
        <position position="477"/>
    </location>
</feature>
<feature type="glycosylation site" description="N-linked (GlcNAc...) asparagine" evidence="4">
    <location>
        <position position="37"/>
    </location>
</feature>
<feature type="glycosylation site" description="N-linked (GlcNAc...) asparagine" evidence="4">
    <location>
        <position position="44"/>
    </location>
</feature>
<feature type="glycosylation site" description="N-linked (GlcNAc...) asparagine" evidence="4">
    <location>
        <position position="149"/>
    </location>
</feature>
<feature type="glycosylation site" description="N-linked (GlcNAc...) asparagine" evidence="4">
    <location>
        <position position="169"/>
    </location>
</feature>
<feature type="glycosylation site" description="N-linked (GlcNAc...) asparagine" evidence="4">
    <location>
        <position position="188"/>
    </location>
</feature>
<feature type="glycosylation site" description="N-linked (GlcNAc...) asparagine" evidence="4">
    <location>
        <position position="214"/>
    </location>
</feature>
<gene>
    <name type="ordered locus">At1g64210</name>
    <name type="ORF">F22C12.3</name>
</gene>
<reference key="1">
    <citation type="journal article" date="2000" name="Nature">
        <title>Sequence and analysis of chromosome 1 of the plant Arabidopsis thaliana.</title>
        <authorList>
            <person name="Theologis A."/>
            <person name="Ecker J.R."/>
            <person name="Palm C.J."/>
            <person name="Federspiel N.A."/>
            <person name="Kaul S."/>
            <person name="White O."/>
            <person name="Alonso J."/>
            <person name="Altafi H."/>
            <person name="Araujo R."/>
            <person name="Bowman C.L."/>
            <person name="Brooks S.Y."/>
            <person name="Buehler E."/>
            <person name="Chan A."/>
            <person name="Chao Q."/>
            <person name="Chen H."/>
            <person name="Cheuk R.F."/>
            <person name="Chin C.W."/>
            <person name="Chung M.K."/>
            <person name="Conn L."/>
            <person name="Conway A.B."/>
            <person name="Conway A.R."/>
            <person name="Creasy T.H."/>
            <person name="Dewar K."/>
            <person name="Dunn P."/>
            <person name="Etgu P."/>
            <person name="Feldblyum T.V."/>
            <person name="Feng J.-D."/>
            <person name="Fong B."/>
            <person name="Fujii C.Y."/>
            <person name="Gill J.E."/>
            <person name="Goldsmith A.D."/>
            <person name="Haas B."/>
            <person name="Hansen N.F."/>
            <person name="Hughes B."/>
            <person name="Huizar L."/>
            <person name="Hunter J.L."/>
            <person name="Jenkins J."/>
            <person name="Johnson-Hopson C."/>
            <person name="Khan S."/>
            <person name="Khaykin E."/>
            <person name="Kim C.J."/>
            <person name="Koo H.L."/>
            <person name="Kremenetskaia I."/>
            <person name="Kurtz D.B."/>
            <person name="Kwan A."/>
            <person name="Lam B."/>
            <person name="Langin-Hooper S."/>
            <person name="Lee A."/>
            <person name="Lee J.M."/>
            <person name="Lenz C.A."/>
            <person name="Li J.H."/>
            <person name="Li Y.-P."/>
            <person name="Lin X."/>
            <person name="Liu S.X."/>
            <person name="Liu Z.A."/>
            <person name="Luros J.S."/>
            <person name="Maiti R."/>
            <person name="Marziali A."/>
            <person name="Militscher J."/>
            <person name="Miranda M."/>
            <person name="Nguyen M."/>
            <person name="Nierman W.C."/>
            <person name="Osborne B.I."/>
            <person name="Pai G."/>
            <person name="Peterson J."/>
            <person name="Pham P.K."/>
            <person name="Rizzo M."/>
            <person name="Rooney T."/>
            <person name="Rowley D."/>
            <person name="Sakano H."/>
            <person name="Salzberg S.L."/>
            <person name="Schwartz J.R."/>
            <person name="Shinn P."/>
            <person name="Southwick A.M."/>
            <person name="Sun H."/>
            <person name="Tallon L.J."/>
            <person name="Tambunga G."/>
            <person name="Toriumi M.J."/>
            <person name="Town C.D."/>
            <person name="Utterback T."/>
            <person name="Van Aken S."/>
            <person name="Vaysberg M."/>
            <person name="Vysotskaia V.S."/>
            <person name="Walker M."/>
            <person name="Wu D."/>
            <person name="Yu G."/>
            <person name="Fraser C.M."/>
            <person name="Venter J.C."/>
            <person name="Davis R.W."/>
        </authorList>
    </citation>
    <scope>NUCLEOTIDE SEQUENCE [LARGE SCALE GENOMIC DNA]</scope>
    <source>
        <strain>cv. Columbia</strain>
    </source>
</reference>
<reference key="2">
    <citation type="journal article" date="2017" name="Plant J.">
        <title>Araport11: a complete reannotation of the Arabidopsis thaliana reference genome.</title>
        <authorList>
            <person name="Cheng C.Y."/>
            <person name="Krishnakumar V."/>
            <person name="Chan A.P."/>
            <person name="Thibaud-Nissen F."/>
            <person name="Schobel S."/>
            <person name="Town C.D."/>
        </authorList>
    </citation>
    <scope>GENOME REANNOTATION</scope>
    <source>
        <strain>cv. Columbia</strain>
    </source>
</reference>
<protein>
    <recommendedName>
        <fullName>Putative inactive receptor-like protein kinase At1g64210</fullName>
    </recommendedName>
</protein>
<keyword id="KW-0067">ATP-binding</keyword>
<keyword id="KW-1003">Cell membrane</keyword>
<keyword id="KW-0325">Glycoprotein</keyword>
<keyword id="KW-0433">Leucine-rich repeat</keyword>
<keyword id="KW-0472">Membrane</keyword>
<keyword id="KW-0547">Nucleotide-binding</keyword>
<keyword id="KW-0597">Phosphoprotein</keyword>
<keyword id="KW-1185">Reference proteome</keyword>
<keyword id="KW-0677">Repeat</keyword>
<keyword id="KW-0732">Signal</keyword>
<keyword id="KW-0812">Transmembrane</keyword>
<keyword id="KW-1133">Transmembrane helix</keyword>
<proteinExistence type="evidence at protein level"/>
<dbReference type="EMBL" id="AC007764">
    <property type="protein sequence ID" value="AAF24582.1"/>
    <property type="molecule type" value="Genomic_DNA"/>
</dbReference>
<dbReference type="EMBL" id="CP002684">
    <property type="protein sequence ID" value="AEE34210.1"/>
    <property type="molecule type" value="Genomic_DNA"/>
</dbReference>
<dbReference type="RefSeq" id="NP_176603.1">
    <property type="nucleotide sequence ID" value="NM_105095.2"/>
</dbReference>
<dbReference type="SMR" id="Q9SH71"/>
<dbReference type="BioGRID" id="27947">
    <property type="interactions" value="62"/>
</dbReference>
<dbReference type="IntAct" id="Q9SH71">
    <property type="interactions" value="79"/>
</dbReference>
<dbReference type="STRING" id="3702.Q9SH71"/>
<dbReference type="GlyGen" id="Q9SH71">
    <property type="glycosylation" value="6 sites"/>
</dbReference>
<dbReference type="PaxDb" id="3702-AT1G64210.1"/>
<dbReference type="EnsemblPlants" id="AT1G64210.1">
    <property type="protein sequence ID" value="AT1G64210.1"/>
    <property type="gene ID" value="AT1G64210"/>
</dbReference>
<dbReference type="GeneID" id="842726"/>
<dbReference type="Gramene" id="AT1G64210.1">
    <property type="protein sequence ID" value="AT1G64210.1"/>
    <property type="gene ID" value="AT1G64210"/>
</dbReference>
<dbReference type="KEGG" id="ath:AT1G64210"/>
<dbReference type="Araport" id="AT1G64210"/>
<dbReference type="TAIR" id="AT1G64210"/>
<dbReference type="eggNOG" id="ENOG502QTFK">
    <property type="taxonomic scope" value="Eukaryota"/>
</dbReference>
<dbReference type="HOGENOM" id="CLU_000288_92_6_1"/>
<dbReference type="InParanoid" id="Q9SH71"/>
<dbReference type="OMA" id="RGMYDRV"/>
<dbReference type="PhylomeDB" id="Q9SH71"/>
<dbReference type="PRO" id="PR:Q9SH71"/>
<dbReference type="Proteomes" id="UP000006548">
    <property type="component" value="Chromosome 1"/>
</dbReference>
<dbReference type="ExpressionAtlas" id="Q9SH71">
    <property type="expression patterns" value="baseline and differential"/>
</dbReference>
<dbReference type="GO" id="GO:0005739">
    <property type="term" value="C:mitochondrion"/>
    <property type="evidence" value="ECO:0007005"/>
    <property type="project" value="TAIR"/>
</dbReference>
<dbReference type="GO" id="GO:0005886">
    <property type="term" value="C:plasma membrane"/>
    <property type="evidence" value="ECO:0007669"/>
    <property type="project" value="UniProtKB-SubCell"/>
</dbReference>
<dbReference type="GO" id="GO:0005524">
    <property type="term" value="F:ATP binding"/>
    <property type="evidence" value="ECO:0007669"/>
    <property type="project" value="UniProtKB-KW"/>
</dbReference>
<dbReference type="GO" id="GO:0042802">
    <property type="term" value="F:identical protein binding"/>
    <property type="evidence" value="ECO:0000353"/>
    <property type="project" value="IntAct"/>
</dbReference>
<dbReference type="GO" id="GO:0004672">
    <property type="term" value="F:protein kinase activity"/>
    <property type="evidence" value="ECO:0007669"/>
    <property type="project" value="InterPro"/>
</dbReference>
<dbReference type="FunFam" id="3.30.200.20:FF:000307">
    <property type="entry name" value="pollen receptor-like kinase 1"/>
    <property type="match status" value="1"/>
</dbReference>
<dbReference type="FunFam" id="3.80.10.10:FF:000234">
    <property type="entry name" value="Probable inactive receptor kinase RLK902"/>
    <property type="match status" value="1"/>
</dbReference>
<dbReference type="Gene3D" id="3.30.200.20">
    <property type="entry name" value="Phosphorylase Kinase, domain 1"/>
    <property type="match status" value="1"/>
</dbReference>
<dbReference type="Gene3D" id="3.80.10.10">
    <property type="entry name" value="Ribonuclease Inhibitor"/>
    <property type="match status" value="1"/>
</dbReference>
<dbReference type="Gene3D" id="1.10.510.10">
    <property type="entry name" value="Transferase(Phosphotransferase) domain 1"/>
    <property type="match status" value="1"/>
</dbReference>
<dbReference type="InterPro" id="IPR050994">
    <property type="entry name" value="At_inactive_RLKs"/>
</dbReference>
<dbReference type="InterPro" id="IPR011009">
    <property type="entry name" value="Kinase-like_dom_sf"/>
</dbReference>
<dbReference type="InterPro" id="IPR001611">
    <property type="entry name" value="Leu-rich_rpt"/>
</dbReference>
<dbReference type="InterPro" id="IPR003591">
    <property type="entry name" value="Leu-rich_rpt_typical-subtyp"/>
</dbReference>
<dbReference type="InterPro" id="IPR032675">
    <property type="entry name" value="LRR_dom_sf"/>
</dbReference>
<dbReference type="InterPro" id="IPR013210">
    <property type="entry name" value="LRR_N_plant-typ"/>
</dbReference>
<dbReference type="InterPro" id="IPR000719">
    <property type="entry name" value="Prot_kinase_dom"/>
</dbReference>
<dbReference type="InterPro" id="IPR017441">
    <property type="entry name" value="Protein_kinase_ATP_BS"/>
</dbReference>
<dbReference type="PANTHER" id="PTHR48010">
    <property type="entry name" value="OS05G0588300 PROTEIN"/>
    <property type="match status" value="1"/>
</dbReference>
<dbReference type="PANTHER" id="PTHR48010:SF48">
    <property type="entry name" value="PROTEIN KINASE DOMAIN-CONTAINING PROTEIN"/>
    <property type="match status" value="1"/>
</dbReference>
<dbReference type="Pfam" id="PF00560">
    <property type="entry name" value="LRR_1"/>
    <property type="match status" value="1"/>
</dbReference>
<dbReference type="Pfam" id="PF13855">
    <property type="entry name" value="LRR_8"/>
    <property type="match status" value="2"/>
</dbReference>
<dbReference type="Pfam" id="PF08263">
    <property type="entry name" value="LRRNT_2"/>
    <property type="match status" value="1"/>
</dbReference>
<dbReference type="Pfam" id="PF00069">
    <property type="entry name" value="Pkinase"/>
    <property type="match status" value="1"/>
</dbReference>
<dbReference type="SMART" id="SM00369">
    <property type="entry name" value="LRR_TYP"/>
    <property type="match status" value="4"/>
</dbReference>
<dbReference type="SUPFAM" id="SSF52058">
    <property type="entry name" value="L domain-like"/>
    <property type="match status" value="1"/>
</dbReference>
<dbReference type="SUPFAM" id="SSF56112">
    <property type="entry name" value="Protein kinase-like (PK-like)"/>
    <property type="match status" value="1"/>
</dbReference>
<dbReference type="PROSITE" id="PS00107">
    <property type="entry name" value="PROTEIN_KINASE_ATP"/>
    <property type="match status" value="1"/>
</dbReference>
<dbReference type="PROSITE" id="PS50011">
    <property type="entry name" value="PROTEIN_KINASE_DOM"/>
    <property type="match status" value="1"/>
</dbReference>